<dbReference type="EC" id="2.7.1.148" evidence="1"/>
<dbReference type="EMBL" id="AE017194">
    <property type="protein sequence ID" value="AAS38979.1"/>
    <property type="molecule type" value="Genomic_DNA"/>
</dbReference>
<dbReference type="SMR" id="Q73FG3"/>
<dbReference type="KEGG" id="bca:BCE_0043"/>
<dbReference type="HOGENOM" id="CLU_053057_1_1_9"/>
<dbReference type="UniPathway" id="UPA00056">
    <property type="reaction ID" value="UER00094"/>
</dbReference>
<dbReference type="Proteomes" id="UP000002527">
    <property type="component" value="Chromosome"/>
</dbReference>
<dbReference type="GO" id="GO:0050515">
    <property type="term" value="F:4-(cytidine 5'-diphospho)-2-C-methyl-D-erythritol kinase activity"/>
    <property type="evidence" value="ECO:0007669"/>
    <property type="project" value="UniProtKB-UniRule"/>
</dbReference>
<dbReference type="GO" id="GO:0005524">
    <property type="term" value="F:ATP binding"/>
    <property type="evidence" value="ECO:0007669"/>
    <property type="project" value="UniProtKB-UniRule"/>
</dbReference>
<dbReference type="GO" id="GO:0019288">
    <property type="term" value="P:isopentenyl diphosphate biosynthetic process, methylerythritol 4-phosphate pathway"/>
    <property type="evidence" value="ECO:0007669"/>
    <property type="project" value="UniProtKB-UniRule"/>
</dbReference>
<dbReference type="GO" id="GO:0016114">
    <property type="term" value="P:terpenoid biosynthetic process"/>
    <property type="evidence" value="ECO:0007669"/>
    <property type="project" value="InterPro"/>
</dbReference>
<dbReference type="FunFam" id="3.30.230.10:FF:000029">
    <property type="entry name" value="4-diphosphocytidyl-2-C-methyl-D-erythritol kinase"/>
    <property type="match status" value="1"/>
</dbReference>
<dbReference type="FunFam" id="3.30.70.890:FF:000006">
    <property type="entry name" value="4-diphosphocytidyl-2-C-methyl-D-erythritol kinase"/>
    <property type="match status" value="1"/>
</dbReference>
<dbReference type="Gene3D" id="3.30.230.10">
    <property type="match status" value="1"/>
</dbReference>
<dbReference type="Gene3D" id="3.30.70.890">
    <property type="entry name" value="GHMP kinase, C-terminal domain"/>
    <property type="match status" value="1"/>
</dbReference>
<dbReference type="HAMAP" id="MF_00061">
    <property type="entry name" value="IspE"/>
    <property type="match status" value="1"/>
</dbReference>
<dbReference type="InterPro" id="IPR013750">
    <property type="entry name" value="GHMP_kinase_C_dom"/>
</dbReference>
<dbReference type="InterPro" id="IPR036554">
    <property type="entry name" value="GHMP_kinase_C_sf"/>
</dbReference>
<dbReference type="InterPro" id="IPR006204">
    <property type="entry name" value="GHMP_kinase_N_dom"/>
</dbReference>
<dbReference type="InterPro" id="IPR004424">
    <property type="entry name" value="IspE"/>
</dbReference>
<dbReference type="InterPro" id="IPR020568">
    <property type="entry name" value="Ribosomal_Su5_D2-typ_SF"/>
</dbReference>
<dbReference type="InterPro" id="IPR014721">
    <property type="entry name" value="Ribsml_uS5_D2-typ_fold_subgr"/>
</dbReference>
<dbReference type="NCBIfam" id="TIGR00154">
    <property type="entry name" value="ispE"/>
    <property type="match status" value="1"/>
</dbReference>
<dbReference type="NCBIfam" id="NF011202">
    <property type="entry name" value="PRK14608.1"/>
    <property type="match status" value="1"/>
</dbReference>
<dbReference type="PANTHER" id="PTHR43527">
    <property type="entry name" value="4-DIPHOSPHOCYTIDYL-2-C-METHYL-D-ERYTHRITOL KINASE, CHLOROPLASTIC"/>
    <property type="match status" value="1"/>
</dbReference>
<dbReference type="PANTHER" id="PTHR43527:SF2">
    <property type="entry name" value="4-DIPHOSPHOCYTIDYL-2-C-METHYL-D-ERYTHRITOL KINASE, CHLOROPLASTIC"/>
    <property type="match status" value="1"/>
</dbReference>
<dbReference type="Pfam" id="PF08544">
    <property type="entry name" value="GHMP_kinases_C"/>
    <property type="match status" value="1"/>
</dbReference>
<dbReference type="Pfam" id="PF00288">
    <property type="entry name" value="GHMP_kinases_N"/>
    <property type="match status" value="1"/>
</dbReference>
<dbReference type="PIRSF" id="PIRSF010376">
    <property type="entry name" value="IspE"/>
    <property type="match status" value="1"/>
</dbReference>
<dbReference type="SUPFAM" id="SSF55060">
    <property type="entry name" value="GHMP Kinase, C-terminal domain"/>
    <property type="match status" value="1"/>
</dbReference>
<dbReference type="SUPFAM" id="SSF54211">
    <property type="entry name" value="Ribosomal protein S5 domain 2-like"/>
    <property type="match status" value="1"/>
</dbReference>
<comment type="function">
    <text evidence="1">Catalyzes the phosphorylation of the position 2 hydroxy group of 4-diphosphocytidyl-2C-methyl-D-erythritol.</text>
</comment>
<comment type="catalytic activity">
    <reaction evidence="1">
        <text>4-CDP-2-C-methyl-D-erythritol + ATP = 4-CDP-2-C-methyl-D-erythritol 2-phosphate + ADP + H(+)</text>
        <dbReference type="Rhea" id="RHEA:18437"/>
        <dbReference type="ChEBI" id="CHEBI:15378"/>
        <dbReference type="ChEBI" id="CHEBI:30616"/>
        <dbReference type="ChEBI" id="CHEBI:57823"/>
        <dbReference type="ChEBI" id="CHEBI:57919"/>
        <dbReference type="ChEBI" id="CHEBI:456216"/>
        <dbReference type="EC" id="2.7.1.148"/>
    </reaction>
</comment>
<comment type="pathway">
    <text evidence="1">Isoprenoid biosynthesis; isopentenyl diphosphate biosynthesis via DXP pathway; isopentenyl diphosphate from 1-deoxy-D-xylulose 5-phosphate: step 3/6.</text>
</comment>
<comment type="similarity">
    <text evidence="1">Belongs to the GHMP kinase family. IspE subfamily.</text>
</comment>
<gene>
    <name evidence="1" type="primary">ispE</name>
    <name type="ordered locus">BCE_0043</name>
</gene>
<sequence length="289" mass="31593">MKLLVKAPAKINLSLDVLGKRQDGYHEVKMIMTTIDLADRLELMELAEDRIEILSHNRYVPDDQRNLAYQAAKLLKEKFNVKKGVSITIEKTIPVAAGLAGGSSDAAATLRGLNKLWNLGLTIDQLAELGAEIGSDVSFCVYGGTAIATGRGEQIEHIKTPPSCWVILAKPHIGVSTADVYGNLKLNRVTHPNVDKMVDVINAGDYKGICDTVGNVLEDVTFAMHPEVARIKAQMKRFGADAVLMSGSGPTVFGLVHHDSRMHRIYNGLKGFCEQVYAVRLLGERETLE</sequence>
<protein>
    <recommendedName>
        <fullName evidence="1">4-diphosphocytidyl-2-C-methyl-D-erythritol kinase</fullName>
        <shortName evidence="1">CMK</shortName>
        <ecNumber evidence="1">2.7.1.148</ecNumber>
    </recommendedName>
    <alternativeName>
        <fullName evidence="1">4-(cytidine-5'-diphospho)-2-C-methyl-D-erythritol kinase</fullName>
    </alternativeName>
</protein>
<organism>
    <name type="scientific">Bacillus cereus (strain ATCC 10987 / NRS 248)</name>
    <dbReference type="NCBI Taxonomy" id="222523"/>
    <lineage>
        <taxon>Bacteria</taxon>
        <taxon>Bacillati</taxon>
        <taxon>Bacillota</taxon>
        <taxon>Bacilli</taxon>
        <taxon>Bacillales</taxon>
        <taxon>Bacillaceae</taxon>
        <taxon>Bacillus</taxon>
        <taxon>Bacillus cereus group</taxon>
    </lineage>
</organism>
<proteinExistence type="inferred from homology"/>
<reference key="1">
    <citation type="journal article" date="2004" name="Nucleic Acids Res.">
        <title>The genome sequence of Bacillus cereus ATCC 10987 reveals metabolic adaptations and a large plasmid related to Bacillus anthracis pXO1.</title>
        <authorList>
            <person name="Rasko D.A."/>
            <person name="Ravel J."/>
            <person name="Oekstad O.A."/>
            <person name="Helgason E."/>
            <person name="Cer R.Z."/>
            <person name="Jiang L."/>
            <person name="Shores K.A."/>
            <person name="Fouts D.E."/>
            <person name="Tourasse N.J."/>
            <person name="Angiuoli S.V."/>
            <person name="Kolonay J.F."/>
            <person name="Nelson W.C."/>
            <person name="Kolstoe A.-B."/>
            <person name="Fraser C.M."/>
            <person name="Read T.D."/>
        </authorList>
    </citation>
    <scope>NUCLEOTIDE SEQUENCE [LARGE SCALE GENOMIC DNA]</scope>
    <source>
        <strain>ATCC 10987 / NRS 248</strain>
    </source>
</reference>
<feature type="chain" id="PRO_0000189185" description="4-diphosphocytidyl-2-C-methyl-D-erythritol kinase">
    <location>
        <begin position="1"/>
        <end position="289"/>
    </location>
</feature>
<feature type="active site" evidence="1">
    <location>
        <position position="10"/>
    </location>
</feature>
<feature type="active site" evidence="1">
    <location>
        <position position="136"/>
    </location>
</feature>
<feature type="binding site" evidence="1">
    <location>
        <begin position="94"/>
        <end position="104"/>
    </location>
    <ligand>
        <name>ATP</name>
        <dbReference type="ChEBI" id="CHEBI:30616"/>
    </ligand>
</feature>
<keyword id="KW-0067">ATP-binding</keyword>
<keyword id="KW-0414">Isoprene biosynthesis</keyword>
<keyword id="KW-0418">Kinase</keyword>
<keyword id="KW-0547">Nucleotide-binding</keyword>
<keyword id="KW-0808">Transferase</keyword>
<name>ISPE_BACC1</name>
<evidence type="ECO:0000255" key="1">
    <source>
        <dbReference type="HAMAP-Rule" id="MF_00061"/>
    </source>
</evidence>
<accession>Q73FG3</accession>